<gene>
    <name type="primary">PRM1</name>
</gene>
<protein>
    <recommendedName>
        <fullName>Sperm protamine P1</fullName>
    </recommendedName>
</protein>
<keyword id="KW-0158">Chromosome</keyword>
<keyword id="KW-0217">Developmental protein</keyword>
<keyword id="KW-0221">Differentiation</keyword>
<keyword id="KW-0226">DNA condensation</keyword>
<keyword id="KW-0238">DNA-binding</keyword>
<keyword id="KW-0544">Nucleosome core</keyword>
<keyword id="KW-0539">Nucleus</keyword>
<keyword id="KW-0744">Spermatogenesis</keyword>
<dbReference type="EMBL" id="AF089881">
    <property type="protein sequence ID" value="AAD55340.1"/>
    <property type="molecule type" value="Genomic_DNA"/>
</dbReference>
<dbReference type="GO" id="GO:0000786">
    <property type="term" value="C:nucleosome"/>
    <property type="evidence" value="ECO:0007669"/>
    <property type="project" value="UniProtKB-KW"/>
</dbReference>
<dbReference type="GO" id="GO:0005634">
    <property type="term" value="C:nucleus"/>
    <property type="evidence" value="ECO:0007669"/>
    <property type="project" value="UniProtKB-SubCell"/>
</dbReference>
<dbReference type="GO" id="GO:0003677">
    <property type="term" value="F:DNA binding"/>
    <property type="evidence" value="ECO:0007669"/>
    <property type="project" value="UniProtKB-KW"/>
</dbReference>
<dbReference type="GO" id="GO:0030261">
    <property type="term" value="P:chromosome condensation"/>
    <property type="evidence" value="ECO:0007669"/>
    <property type="project" value="UniProtKB-KW"/>
</dbReference>
<dbReference type="GO" id="GO:0035092">
    <property type="term" value="P:sperm DNA condensation"/>
    <property type="evidence" value="ECO:0007669"/>
    <property type="project" value="InterPro"/>
</dbReference>
<dbReference type="InterPro" id="IPR000221">
    <property type="entry name" value="Protamine_P1"/>
</dbReference>
<dbReference type="PROSITE" id="PS00048">
    <property type="entry name" value="PROTAMINE_P1"/>
    <property type="match status" value="1"/>
</dbReference>
<accession>Q9TUC2</accession>
<evidence type="ECO:0000250" key="1"/>
<evidence type="ECO:0000256" key="2">
    <source>
        <dbReference type="SAM" id="MobiDB-lite"/>
    </source>
</evidence>
<evidence type="ECO:0000305" key="3"/>
<proteinExistence type="evidence at transcript level"/>
<reference key="1">
    <citation type="journal article" date="1999" name="Mol. Phylogenet. Evol.">
        <title>Systematic relationships within the dasyurid marsupial tribe Sminthopsini -- a multigene approach.</title>
        <authorList>
            <person name="Blacket M.J."/>
            <person name="Krajewski C."/>
            <person name="Labrinidis A."/>
            <person name="Cambron B."/>
            <person name="Cooper S."/>
            <person name="Westerman M."/>
        </authorList>
    </citation>
    <scope>NUCLEOTIDE SEQUENCE [GENOMIC DNA]</scope>
</reference>
<organism>
    <name type="scientific">Sminthopsis longicaudata</name>
    <name type="common">Long-tailed dunnart</name>
    <dbReference type="NCBI Taxonomy" id="90764"/>
    <lineage>
        <taxon>Eukaryota</taxon>
        <taxon>Metazoa</taxon>
        <taxon>Chordata</taxon>
        <taxon>Craniata</taxon>
        <taxon>Vertebrata</taxon>
        <taxon>Euteleostomi</taxon>
        <taxon>Mammalia</taxon>
        <taxon>Metatheria</taxon>
        <taxon>Dasyuromorphia</taxon>
        <taxon>Dasyuridae</taxon>
        <taxon>Sminthopsis</taxon>
    </lineage>
</organism>
<feature type="chain" id="PRO_0000191569" description="Sperm protamine P1">
    <location>
        <begin position="1"/>
        <end position="62"/>
    </location>
</feature>
<feature type="region of interest" description="Disordered" evidence="2">
    <location>
        <begin position="1"/>
        <end position="62"/>
    </location>
</feature>
<sequence>MARYRRHSRSRSRSRYRRRRRRRSRHHNRRRTYRRSRRHSRRRRGRRRGYSRRRYSRRRRRY</sequence>
<comment type="function">
    <text evidence="1">Protamines substitute for histones in the chromatin of sperm during the haploid phase of spermatogenesis. They compact sperm DNA into a highly condensed, stable and inactive complex (By similarity).</text>
</comment>
<comment type="subcellular location">
    <subcellularLocation>
        <location evidence="1">Nucleus</location>
    </subcellularLocation>
    <subcellularLocation>
        <location evidence="1">Chromosome</location>
    </subcellularLocation>
</comment>
<comment type="tissue specificity">
    <text>Testis.</text>
</comment>
<comment type="similarity">
    <text evidence="3">Belongs to the protamine P1 family.</text>
</comment>
<name>HSP1_SMILO</name>